<evidence type="ECO:0000255" key="1">
    <source>
        <dbReference type="HAMAP-Rule" id="MF_01454"/>
    </source>
</evidence>
<evidence type="ECO:0000255" key="2">
    <source>
        <dbReference type="PROSITE-ProRule" id="PRU01231"/>
    </source>
</evidence>
<evidence type="ECO:0000256" key="3">
    <source>
        <dbReference type="SAM" id="MobiDB-lite"/>
    </source>
</evidence>
<comment type="function">
    <text evidence="1">An essential GTPase which binds GTP, GDP and possibly (p)ppGpp with moderate affinity, with high nucleotide exchange rates and a fairly low GTP hydrolysis rate. Plays a role in control of the cell cycle, stress response, ribosome biogenesis and in those bacteria that undergo differentiation, in morphogenesis control.</text>
</comment>
<comment type="cofactor">
    <cofactor evidence="1">
        <name>Mg(2+)</name>
        <dbReference type="ChEBI" id="CHEBI:18420"/>
    </cofactor>
</comment>
<comment type="subunit">
    <text evidence="1">Monomer.</text>
</comment>
<comment type="subcellular location">
    <subcellularLocation>
        <location evidence="1">Cytoplasm</location>
    </subcellularLocation>
</comment>
<comment type="similarity">
    <text evidence="1">Belongs to the TRAFAC class OBG-HflX-like GTPase superfamily. OBG GTPase family.</text>
</comment>
<name>OBG_ECO7I</name>
<gene>
    <name evidence="1" type="primary">obg</name>
    <name type="ordered locus">ECIAI39_3678</name>
</gene>
<protein>
    <recommendedName>
        <fullName evidence="1">GTPase Obg</fullName>
        <ecNumber evidence="1">3.6.5.-</ecNumber>
    </recommendedName>
    <alternativeName>
        <fullName evidence="1">GTP-binding protein Obg</fullName>
    </alternativeName>
</protein>
<feature type="chain" id="PRO_0000385925" description="GTPase Obg">
    <location>
        <begin position="1"/>
        <end position="390"/>
    </location>
</feature>
<feature type="domain" description="Obg" evidence="2">
    <location>
        <begin position="1"/>
        <end position="159"/>
    </location>
</feature>
<feature type="domain" description="OBG-type G" evidence="1">
    <location>
        <begin position="160"/>
        <end position="333"/>
    </location>
</feature>
<feature type="region of interest" description="Disordered" evidence="3">
    <location>
        <begin position="127"/>
        <end position="147"/>
    </location>
</feature>
<feature type="compositionally biased region" description="Polar residues" evidence="3">
    <location>
        <begin position="129"/>
        <end position="145"/>
    </location>
</feature>
<feature type="binding site" evidence="1">
    <location>
        <begin position="166"/>
        <end position="173"/>
    </location>
    <ligand>
        <name>GTP</name>
        <dbReference type="ChEBI" id="CHEBI:37565"/>
    </ligand>
</feature>
<feature type="binding site" evidence="1">
    <location>
        <position position="173"/>
    </location>
    <ligand>
        <name>Mg(2+)</name>
        <dbReference type="ChEBI" id="CHEBI:18420"/>
    </ligand>
</feature>
<feature type="binding site" evidence="1">
    <location>
        <begin position="191"/>
        <end position="195"/>
    </location>
    <ligand>
        <name>GTP</name>
        <dbReference type="ChEBI" id="CHEBI:37565"/>
    </ligand>
</feature>
<feature type="binding site" evidence="1">
    <location>
        <position position="193"/>
    </location>
    <ligand>
        <name>Mg(2+)</name>
        <dbReference type="ChEBI" id="CHEBI:18420"/>
    </ligand>
</feature>
<feature type="binding site" evidence="1">
    <location>
        <begin position="213"/>
        <end position="216"/>
    </location>
    <ligand>
        <name>GTP</name>
        <dbReference type="ChEBI" id="CHEBI:37565"/>
    </ligand>
</feature>
<feature type="binding site" evidence="1">
    <location>
        <begin position="283"/>
        <end position="286"/>
    </location>
    <ligand>
        <name>GTP</name>
        <dbReference type="ChEBI" id="CHEBI:37565"/>
    </ligand>
</feature>
<feature type="binding site" evidence="1">
    <location>
        <begin position="314"/>
        <end position="316"/>
    </location>
    <ligand>
        <name>GTP</name>
        <dbReference type="ChEBI" id="CHEBI:37565"/>
    </ligand>
</feature>
<accession>B7NKQ0</accession>
<keyword id="KW-0963">Cytoplasm</keyword>
<keyword id="KW-0342">GTP-binding</keyword>
<keyword id="KW-0378">Hydrolase</keyword>
<keyword id="KW-0460">Magnesium</keyword>
<keyword id="KW-0479">Metal-binding</keyword>
<keyword id="KW-0547">Nucleotide-binding</keyword>
<reference key="1">
    <citation type="journal article" date="2009" name="PLoS Genet.">
        <title>Organised genome dynamics in the Escherichia coli species results in highly diverse adaptive paths.</title>
        <authorList>
            <person name="Touchon M."/>
            <person name="Hoede C."/>
            <person name="Tenaillon O."/>
            <person name="Barbe V."/>
            <person name="Baeriswyl S."/>
            <person name="Bidet P."/>
            <person name="Bingen E."/>
            <person name="Bonacorsi S."/>
            <person name="Bouchier C."/>
            <person name="Bouvet O."/>
            <person name="Calteau A."/>
            <person name="Chiapello H."/>
            <person name="Clermont O."/>
            <person name="Cruveiller S."/>
            <person name="Danchin A."/>
            <person name="Diard M."/>
            <person name="Dossat C."/>
            <person name="Karoui M.E."/>
            <person name="Frapy E."/>
            <person name="Garry L."/>
            <person name="Ghigo J.M."/>
            <person name="Gilles A.M."/>
            <person name="Johnson J."/>
            <person name="Le Bouguenec C."/>
            <person name="Lescat M."/>
            <person name="Mangenot S."/>
            <person name="Martinez-Jehanne V."/>
            <person name="Matic I."/>
            <person name="Nassif X."/>
            <person name="Oztas S."/>
            <person name="Petit M.A."/>
            <person name="Pichon C."/>
            <person name="Rouy Z."/>
            <person name="Ruf C.S."/>
            <person name="Schneider D."/>
            <person name="Tourret J."/>
            <person name="Vacherie B."/>
            <person name="Vallenet D."/>
            <person name="Medigue C."/>
            <person name="Rocha E.P.C."/>
            <person name="Denamur E."/>
        </authorList>
    </citation>
    <scope>NUCLEOTIDE SEQUENCE [LARGE SCALE GENOMIC DNA]</scope>
    <source>
        <strain>IAI39 / ExPEC</strain>
    </source>
</reference>
<sequence>MKFVDEASILVVAGDGGNGCVSFRREKYIPKGGPDGGDGGDGGDVWMEADENLNTLIDYRFEKSFRAERGQNGASRDCTGKRGKDVTIKVPVGTRVIDQGTGETMGDMTKHGQRLLVAKGGWHGLGNTRFKSSVNRTPRQKTNGTPGDKRELLLELMLLADVGMLGMPNAGKSTFIRAVSAAKPKVADYPFTTLVPSLGVVRMDNEKSFVVADIPGLIEGAAEGAGLGIRFLKHLERCRVLLHLIDIDPIDGTDPVKNARIIISELEKYSQDLAAKPRWLVFNKIDLLDKAEAEEKAKAIAEALGWEDKYYLISAASGLGVKDLCWDVMTFIIENPVVQAEEAKQPEKVEFMWDDYHRQQLEEIAEEDDEDWDDDWDEDDEEGVEFIYKR</sequence>
<proteinExistence type="inferred from homology"/>
<organism>
    <name type="scientific">Escherichia coli O7:K1 (strain IAI39 / ExPEC)</name>
    <dbReference type="NCBI Taxonomy" id="585057"/>
    <lineage>
        <taxon>Bacteria</taxon>
        <taxon>Pseudomonadati</taxon>
        <taxon>Pseudomonadota</taxon>
        <taxon>Gammaproteobacteria</taxon>
        <taxon>Enterobacterales</taxon>
        <taxon>Enterobacteriaceae</taxon>
        <taxon>Escherichia</taxon>
    </lineage>
</organism>
<dbReference type="EC" id="3.6.5.-" evidence="1"/>
<dbReference type="EMBL" id="CU928164">
    <property type="protein sequence ID" value="CAR19794.1"/>
    <property type="molecule type" value="Genomic_DNA"/>
</dbReference>
<dbReference type="RefSeq" id="YP_002409581.1">
    <property type="nucleotide sequence ID" value="NC_011750.1"/>
</dbReference>
<dbReference type="SMR" id="B7NKQ0"/>
<dbReference type="STRING" id="585057.ECIAI39_3678"/>
<dbReference type="KEGG" id="ect:ECIAI39_3678"/>
<dbReference type="PATRIC" id="fig|585057.6.peg.3811"/>
<dbReference type="HOGENOM" id="CLU_011747_2_0_6"/>
<dbReference type="Proteomes" id="UP000000749">
    <property type="component" value="Chromosome"/>
</dbReference>
<dbReference type="GO" id="GO:0005737">
    <property type="term" value="C:cytoplasm"/>
    <property type="evidence" value="ECO:0007669"/>
    <property type="project" value="UniProtKB-SubCell"/>
</dbReference>
<dbReference type="GO" id="GO:0005525">
    <property type="term" value="F:GTP binding"/>
    <property type="evidence" value="ECO:0007669"/>
    <property type="project" value="UniProtKB-UniRule"/>
</dbReference>
<dbReference type="GO" id="GO:0003924">
    <property type="term" value="F:GTPase activity"/>
    <property type="evidence" value="ECO:0007669"/>
    <property type="project" value="UniProtKB-UniRule"/>
</dbReference>
<dbReference type="GO" id="GO:0000287">
    <property type="term" value="F:magnesium ion binding"/>
    <property type="evidence" value="ECO:0007669"/>
    <property type="project" value="InterPro"/>
</dbReference>
<dbReference type="GO" id="GO:0042254">
    <property type="term" value="P:ribosome biogenesis"/>
    <property type="evidence" value="ECO:0007669"/>
    <property type="project" value="UniProtKB-UniRule"/>
</dbReference>
<dbReference type="CDD" id="cd01898">
    <property type="entry name" value="Obg"/>
    <property type="match status" value="1"/>
</dbReference>
<dbReference type="FunFam" id="2.70.210.12:FF:000001">
    <property type="entry name" value="GTPase Obg"/>
    <property type="match status" value="1"/>
</dbReference>
<dbReference type="FunFam" id="3.40.50.300:FF:000185">
    <property type="entry name" value="GTPase Obg"/>
    <property type="match status" value="1"/>
</dbReference>
<dbReference type="Gene3D" id="2.70.210.12">
    <property type="entry name" value="GTP1/OBG domain"/>
    <property type="match status" value="1"/>
</dbReference>
<dbReference type="Gene3D" id="3.40.50.300">
    <property type="entry name" value="P-loop containing nucleotide triphosphate hydrolases"/>
    <property type="match status" value="1"/>
</dbReference>
<dbReference type="HAMAP" id="MF_01454">
    <property type="entry name" value="GTPase_Obg"/>
    <property type="match status" value="1"/>
</dbReference>
<dbReference type="InterPro" id="IPR031167">
    <property type="entry name" value="G_OBG"/>
</dbReference>
<dbReference type="InterPro" id="IPR006073">
    <property type="entry name" value="GTP-bd"/>
</dbReference>
<dbReference type="InterPro" id="IPR014100">
    <property type="entry name" value="GTP-bd_Obg/CgtA"/>
</dbReference>
<dbReference type="InterPro" id="IPR006074">
    <property type="entry name" value="GTP1-OBG_CS"/>
</dbReference>
<dbReference type="InterPro" id="IPR006169">
    <property type="entry name" value="GTP1_OBG_dom"/>
</dbReference>
<dbReference type="InterPro" id="IPR036726">
    <property type="entry name" value="GTP1_OBG_dom_sf"/>
</dbReference>
<dbReference type="InterPro" id="IPR045086">
    <property type="entry name" value="OBG_GTPase"/>
</dbReference>
<dbReference type="InterPro" id="IPR027417">
    <property type="entry name" value="P-loop_NTPase"/>
</dbReference>
<dbReference type="NCBIfam" id="TIGR02729">
    <property type="entry name" value="Obg_CgtA"/>
    <property type="match status" value="1"/>
</dbReference>
<dbReference type="NCBIfam" id="NF008955">
    <property type="entry name" value="PRK12297.1"/>
    <property type="match status" value="1"/>
</dbReference>
<dbReference type="NCBIfam" id="NF008956">
    <property type="entry name" value="PRK12299.1"/>
    <property type="match status" value="1"/>
</dbReference>
<dbReference type="PANTHER" id="PTHR11702">
    <property type="entry name" value="DEVELOPMENTALLY REGULATED GTP-BINDING PROTEIN-RELATED"/>
    <property type="match status" value="1"/>
</dbReference>
<dbReference type="PANTHER" id="PTHR11702:SF31">
    <property type="entry name" value="MITOCHONDRIAL RIBOSOME-ASSOCIATED GTPASE 2"/>
    <property type="match status" value="1"/>
</dbReference>
<dbReference type="Pfam" id="PF01018">
    <property type="entry name" value="GTP1_OBG"/>
    <property type="match status" value="1"/>
</dbReference>
<dbReference type="Pfam" id="PF01926">
    <property type="entry name" value="MMR_HSR1"/>
    <property type="match status" value="1"/>
</dbReference>
<dbReference type="PIRSF" id="PIRSF002401">
    <property type="entry name" value="GTP_bd_Obg/CgtA"/>
    <property type="match status" value="1"/>
</dbReference>
<dbReference type="PRINTS" id="PR00326">
    <property type="entry name" value="GTP1OBG"/>
</dbReference>
<dbReference type="SUPFAM" id="SSF82051">
    <property type="entry name" value="Obg GTP-binding protein N-terminal domain"/>
    <property type="match status" value="1"/>
</dbReference>
<dbReference type="SUPFAM" id="SSF52540">
    <property type="entry name" value="P-loop containing nucleoside triphosphate hydrolases"/>
    <property type="match status" value="1"/>
</dbReference>
<dbReference type="PROSITE" id="PS51710">
    <property type="entry name" value="G_OBG"/>
    <property type="match status" value="1"/>
</dbReference>
<dbReference type="PROSITE" id="PS00905">
    <property type="entry name" value="GTP1_OBG"/>
    <property type="match status" value="1"/>
</dbReference>
<dbReference type="PROSITE" id="PS51883">
    <property type="entry name" value="OBG"/>
    <property type="match status" value="1"/>
</dbReference>